<evidence type="ECO:0000250" key="1"/>
<evidence type="ECO:0000250" key="2">
    <source>
        <dbReference type="UniProtKB" id="P05231"/>
    </source>
</evidence>
<evidence type="ECO:0000250" key="3">
    <source>
        <dbReference type="UniProtKB" id="P08505"/>
    </source>
</evidence>
<evidence type="ECO:0000255" key="4"/>
<evidence type="ECO:0000305" key="5"/>
<protein>
    <recommendedName>
        <fullName>Interleukin-6</fullName>
        <shortName>IL-6</shortName>
    </recommendedName>
</protein>
<name>IL6_BUBBU</name>
<reference key="1">
    <citation type="submission" date="2003-07" db="EMBL/GenBank/DDBJ databases">
        <title>Identification and molecular characterization of major Th2 cytokines of Indian water buffalo (Bubalus bubalis).</title>
        <authorList>
            <person name="Premraj A."/>
            <person name="Sreekumar E."/>
            <person name="Rasool T.J."/>
        </authorList>
    </citation>
    <scope>NUCLEOTIDE SEQUENCE [MRNA]</scope>
</reference>
<comment type="function">
    <text evidence="2">Cytokine with a wide variety of biological functions in immunity, tissue regeneration, and metabolism. Binds to IL6R, then the complex associates to the signaling subunit IL6ST/gp130 to trigger the intracellular IL6-signaling pathway. The interaction with the membrane-bound IL6R and IL6ST stimulates 'classic signaling', whereas the binding of IL6 and soluble IL6R to IL6ST stimulates 'trans-signaling'. Alternatively, 'cluster signaling' occurs when membrane-bound IL6:IL6R complexes on transmitter cells activate IL6ST receptors on neighboring receiver cells.</text>
</comment>
<comment type="function">
    <text evidence="2 3">IL6 is a potent inducer of the acute phase response. Rapid production of IL6 contributes to host defense during infection and tissue injury, but excessive IL6 synthesis is involved in disease pathology. In the innate immune response, is synthesized by myeloid cells, such as macrophages and dendritic cells, upon recognition of pathogens through toll-like receptors (TLRs) at the site of infection or tissue injury (By similarity). In the adaptive immune response, is required for the differentiation of B cells into immunoglobulin-secreting cells. Plays a major role in the differentiation of CD4(+) T cell subsets. Essential factor for the development of T follicular helper (Tfh) cells that are required for the induction of germinal-center formation. Required to drive naive CD4(+) T cells to the Th17 lineage. Also required for proliferation of myeloma cells and the survival of plasmablast cells (By similarity).</text>
</comment>
<comment type="function">
    <text evidence="2 3">Acts as an essential factor in bone homeostasis and on vessels directly or indirectly by induction of VEGF, resulting in increased angiogenesis activity and vascular permeability. Induces, through 'trans-signaling' and synergistically with IL1B and TNF, the production of VEGF. Involved in metabolic controls, is discharged into the bloodstream after muscle contraction increasing lipolysis and improving insulin resistance (By similarity). 'Trans-signaling' in central nervous system also regulates energy and glucose homeostasis. Mediates, through GLP-1, crosstalk between insulin-sensitive tissues, intestinal L cells and pancreatic islets to adapt to changes in insulin demand (By similarity). Also acts as a myokine (By similarity). Plays a protective role during liver injury, being required for maintenance of tissue regeneration (By similarity). Also has a pivotal role in iron metabolism by regulating HAMP/hepcidin expression upon inflammation or bacterial infection (By similarity). Through activation of IL6ST-YAP-NOTCH pathway, induces inflammation-induced epithelial regeneration (By similarity).</text>
</comment>
<comment type="subunit">
    <text evidence="2">Component of a hexamer of two molecules each of IL6, IL6R and IL6ST; first binds to IL6R to associate with the signaling subunit IL6ST. Interacts with IL6R (via the N-terminal ectodomain); this interaction may be affected by IL6R-binding with SORL1, hence decreasing IL6 cis signaling. Interacts with SORL1 (via the N-terminal ectodomain); this interaction leads to IL6 internalization and lysosomal degradation. May form a trimeric complex with the soluble SORL1 ectodomain and soluble IL6R receptor; this interaction might stabilize circulating IL6, hence promoting IL6 trans signaling.</text>
</comment>
<comment type="subcellular location">
    <subcellularLocation>
        <location evidence="2">Secreted</location>
    </subcellularLocation>
</comment>
<comment type="similarity">
    <text evidence="5">Belongs to the IL-6 superfamily.</text>
</comment>
<keyword id="KW-0011">Acute phase</keyword>
<keyword id="KW-0202">Cytokine</keyword>
<keyword id="KW-1015">Disulfide bond</keyword>
<keyword id="KW-0325">Glycoprotein</keyword>
<keyword id="KW-0339">Growth factor</keyword>
<keyword id="KW-0597">Phosphoprotein</keyword>
<keyword id="KW-0964">Secreted</keyword>
<keyword id="KW-0732">Signal</keyword>
<organism>
    <name type="scientific">Bubalus bubalis</name>
    <name type="common">Domestic water buffalo</name>
    <dbReference type="NCBI Taxonomy" id="89462"/>
    <lineage>
        <taxon>Eukaryota</taxon>
        <taxon>Metazoa</taxon>
        <taxon>Chordata</taxon>
        <taxon>Craniata</taxon>
        <taxon>Vertebrata</taxon>
        <taxon>Euteleostomi</taxon>
        <taxon>Mammalia</taxon>
        <taxon>Eutheria</taxon>
        <taxon>Laurasiatheria</taxon>
        <taxon>Artiodactyla</taxon>
        <taxon>Ruminantia</taxon>
        <taxon>Pecora</taxon>
        <taxon>Bovidae</taxon>
        <taxon>Bovinae</taxon>
        <taxon>Bubalus</taxon>
    </lineage>
</organism>
<gene>
    <name type="primary">IL6</name>
</gene>
<dbReference type="EMBL" id="AY347710">
    <property type="protein sequence ID" value="AAQ54301.1"/>
    <property type="molecule type" value="mRNA"/>
</dbReference>
<dbReference type="RefSeq" id="NP_001277909.1">
    <property type="nucleotide sequence ID" value="NM_001290980.1"/>
</dbReference>
<dbReference type="SMR" id="Q6V919"/>
<dbReference type="GlyCosmos" id="Q6V919">
    <property type="glycosylation" value="1 site, No reported glycans"/>
</dbReference>
<dbReference type="GeneID" id="102415101"/>
<dbReference type="CTD" id="3569"/>
<dbReference type="OrthoDB" id="8943569at2759"/>
<dbReference type="GO" id="GO:0005615">
    <property type="term" value="C:extracellular space"/>
    <property type="evidence" value="ECO:0007669"/>
    <property type="project" value="UniProtKB-KW"/>
</dbReference>
<dbReference type="GO" id="GO:0005896">
    <property type="term" value="C:interleukin-6 receptor complex"/>
    <property type="evidence" value="ECO:0007669"/>
    <property type="project" value="TreeGrafter"/>
</dbReference>
<dbReference type="GO" id="GO:0005125">
    <property type="term" value="F:cytokine activity"/>
    <property type="evidence" value="ECO:0007669"/>
    <property type="project" value="UniProtKB-KW"/>
</dbReference>
<dbReference type="GO" id="GO:0008083">
    <property type="term" value="F:growth factor activity"/>
    <property type="evidence" value="ECO:0007669"/>
    <property type="project" value="UniProtKB-KW"/>
</dbReference>
<dbReference type="GO" id="GO:0005138">
    <property type="term" value="F:interleukin-6 receptor binding"/>
    <property type="evidence" value="ECO:0007669"/>
    <property type="project" value="InterPro"/>
</dbReference>
<dbReference type="GO" id="GO:0006953">
    <property type="term" value="P:acute-phase response"/>
    <property type="evidence" value="ECO:0007669"/>
    <property type="project" value="UniProtKB-KW"/>
</dbReference>
<dbReference type="GO" id="GO:0042593">
    <property type="term" value="P:glucose homeostasis"/>
    <property type="evidence" value="ECO:0000250"/>
    <property type="project" value="UniProtKB"/>
</dbReference>
<dbReference type="GO" id="GO:0072574">
    <property type="term" value="P:hepatocyte proliferation"/>
    <property type="evidence" value="ECO:0000250"/>
    <property type="project" value="UniProtKB"/>
</dbReference>
<dbReference type="GO" id="GO:0070102">
    <property type="term" value="P:interleukin-6-mediated signaling pathway"/>
    <property type="evidence" value="ECO:0000250"/>
    <property type="project" value="UniProtKB"/>
</dbReference>
<dbReference type="GO" id="GO:0097421">
    <property type="term" value="P:liver regeneration"/>
    <property type="evidence" value="ECO:0000250"/>
    <property type="project" value="UniProtKB"/>
</dbReference>
<dbReference type="GO" id="GO:0009891">
    <property type="term" value="P:positive regulation of biosynthetic process"/>
    <property type="evidence" value="ECO:0007669"/>
    <property type="project" value="UniProtKB-ARBA"/>
</dbReference>
<dbReference type="GO" id="GO:0051240">
    <property type="term" value="P:positive regulation of multicellular organismal process"/>
    <property type="evidence" value="ECO:0007669"/>
    <property type="project" value="UniProtKB-ARBA"/>
</dbReference>
<dbReference type="GO" id="GO:0046427">
    <property type="term" value="P:positive regulation of receptor signaling pathway via JAK-STAT"/>
    <property type="evidence" value="ECO:0007669"/>
    <property type="project" value="TreeGrafter"/>
</dbReference>
<dbReference type="GO" id="GO:1904894">
    <property type="term" value="P:positive regulation of receptor signaling pathway via STAT"/>
    <property type="evidence" value="ECO:0000250"/>
    <property type="project" value="UniProtKB"/>
</dbReference>
<dbReference type="GO" id="GO:0070092">
    <property type="term" value="P:regulation of glucagon secretion"/>
    <property type="evidence" value="ECO:0000250"/>
    <property type="project" value="UniProtKB"/>
</dbReference>
<dbReference type="GO" id="GO:0050796">
    <property type="term" value="P:regulation of insulin secretion"/>
    <property type="evidence" value="ECO:0000250"/>
    <property type="project" value="UniProtKB"/>
</dbReference>
<dbReference type="GO" id="GO:0014823">
    <property type="term" value="P:response to activity"/>
    <property type="evidence" value="ECO:0000250"/>
    <property type="project" value="UniProtKB"/>
</dbReference>
<dbReference type="GO" id="GO:0072540">
    <property type="term" value="P:T-helper 17 cell lineage commitment"/>
    <property type="evidence" value="ECO:0000250"/>
    <property type="project" value="UniProtKB"/>
</dbReference>
<dbReference type="GO" id="GO:0010573">
    <property type="term" value="P:vascular endothelial growth factor production"/>
    <property type="evidence" value="ECO:0000250"/>
    <property type="project" value="UniProtKB"/>
</dbReference>
<dbReference type="FunFam" id="1.20.1250.10:FF:000006">
    <property type="entry name" value="Interleukin-6"/>
    <property type="match status" value="1"/>
</dbReference>
<dbReference type="Gene3D" id="1.20.1250.10">
    <property type="match status" value="1"/>
</dbReference>
<dbReference type="InterPro" id="IPR009079">
    <property type="entry name" value="4_helix_cytokine-like_core"/>
</dbReference>
<dbReference type="InterPro" id="IPR003574">
    <property type="entry name" value="IL-6-like"/>
</dbReference>
<dbReference type="InterPro" id="IPR030474">
    <property type="entry name" value="IL-6/GCSF/MGF"/>
</dbReference>
<dbReference type="InterPro" id="IPR030473">
    <property type="entry name" value="IL6/GCSF/MGF_CS"/>
</dbReference>
<dbReference type="PANTHER" id="PTHR48494">
    <property type="entry name" value="INTERLEUKIN-6"/>
    <property type="match status" value="1"/>
</dbReference>
<dbReference type="PANTHER" id="PTHR48494:SF1">
    <property type="entry name" value="INTERLEUKIN-6"/>
    <property type="match status" value="1"/>
</dbReference>
<dbReference type="Pfam" id="PF00489">
    <property type="entry name" value="IL6"/>
    <property type="match status" value="1"/>
</dbReference>
<dbReference type="PIRSF" id="PIRSF001935">
    <property type="entry name" value="IL6_MGF_GCSF"/>
    <property type="match status" value="1"/>
</dbReference>
<dbReference type="PRINTS" id="PR00433">
    <property type="entry name" value="IL6GCSFMGF"/>
</dbReference>
<dbReference type="PRINTS" id="PR00434">
    <property type="entry name" value="INTERLEUKIN6"/>
</dbReference>
<dbReference type="SMART" id="SM00126">
    <property type="entry name" value="IL6"/>
    <property type="match status" value="1"/>
</dbReference>
<dbReference type="SUPFAM" id="SSF47266">
    <property type="entry name" value="4-helical cytokines"/>
    <property type="match status" value="1"/>
</dbReference>
<dbReference type="PROSITE" id="PS00254">
    <property type="entry name" value="INTERLEUKIN_6"/>
    <property type="match status" value="1"/>
</dbReference>
<feature type="signal peptide" evidence="1">
    <location>
        <begin position="1"/>
        <end position="29"/>
    </location>
</feature>
<feature type="chain" id="PRO_0000015574" description="Interleukin-6">
    <location>
        <begin position="30"/>
        <end position="208"/>
    </location>
</feature>
<feature type="modified residue" description="Phosphoserine" evidence="2">
    <location>
        <position position="81"/>
    </location>
</feature>
<feature type="glycosylation site" description="N-linked (GlcNAc...) asparagine" evidence="4">
    <location>
        <position position="38"/>
    </location>
</feature>
<feature type="disulfide bond" evidence="1">
    <location>
        <begin position="72"/>
        <end position="78"/>
    </location>
</feature>
<feature type="disulfide bond" evidence="1">
    <location>
        <begin position="101"/>
        <end position="111"/>
    </location>
</feature>
<sequence length="208" mass="23773">MNSRFTSAFTPFAVSLGLLLVMTSAFPTPGPLGEDFKNDTTPGRLLLTTPEKTEALIKRMVDKISAMRKEICEKNDECESSKDTLAENKLNLPKMEEKDGCFQSGFNQAICLIRTTAGLLEYQIYLDYLQNEYEGNRENVRDLRKNIRTLIQILKQKIADLITTPATNTDLLEKMQSSNEWVKNAKIILILRNLENFLQFSLRAIRMK</sequence>
<proteinExistence type="evidence at transcript level"/>
<accession>Q6V919</accession>